<organism>
    <name type="scientific">Escherichia coli O139:H28 (strain E24377A / ETEC)</name>
    <dbReference type="NCBI Taxonomy" id="331111"/>
    <lineage>
        <taxon>Bacteria</taxon>
        <taxon>Pseudomonadati</taxon>
        <taxon>Pseudomonadota</taxon>
        <taxon>Gammaproteobacteria</taxon>
        <taxon>Enterobacterales</taxon>
        <taxon>Enterobacteriaceae</taxon>
        <taxon>Escherichia</taxon>
    </lineage>
</organism>
<name>TOLB_ECO24</name>
<proteinExistence type="inferred from homology"/>
<gene>
    <name evidence="1" type="primary">tolB</name>
    <name type="ordered locus">EcE24377A_0769</name>
</gene>
<reference key="1">
    <citation type="journal article" date="2008" name="J. Bacteriol.">
        <title>The pangenome structure of Escherichia coli: comparative genomic analysis of E. coli commensal and pathogenic isolates.</title>
        <authorList>
            <person name="Rasko D.A."/>
            <person name="Rosovitz M.J."/>
            <person name="Myers G.S.A."/>
            <person name="Mongodin E.F."/>
            <person name="Fricke W.F."/>
            <person name="Gajer P."/>
            <person name="Crabtree J."/>
            <person name="Sebaihia M."/>
            <person name="Thomson N.R."/>
            <person name="Chaudhuri R."/>
            <person name="Henderson I.R."/>
            <person name="Sperandio V."/>
            <person name="Ravel J."/>
        </authorList>
    </citation>
    <scope>NUCLEOTIDE SEQUENCE [LARGE SCALE GENOMIC DNA]</scope>
    <source>
        <strain>E24377A / ETEC</strain>
    </source>
</reference>
<comment type="function">
    <text evidence="1">Part of the Tol-Pal system, which plays a role in outer membrane invagination during cell division and is important for maintaining outer membrane integrity. TolB occupies a key intermediary position in the Tol-Pal system because it communicates directly with both membrane-embedded components, Pal in the outer membrane and TolA in the inner membrane.</text>
</comment>
<comment type="subunit">
    <text evidence="1">The Tol-Pal system is composed of five core proteins: the inner membrane proteins TolA, TolQ and TolR, the periplasmic protein TolB and the outer membrane protein Pal. They form a network linking the inner and outer membranes and the peptidoglycan layer.</text>
</comment>
<comment type="subcellular location">
    <subcellularLocation>
        <location evidence="1">Periplasm</location>
    </subcellularLocation>
</comment>
<comment type="similarity">
    <text evidence="1">Belongs to the TolB family.</text>
</comment>
<keyword id="KW-0131">Cell cycle</keyword>
<keyword id="KW-0132">Cell division</keyword>
<keyword id="KW-0574">Periplasm</keyword>
<keyword id="KW-1185">Reference proteome</keyword>
<keyword id="KW-0732">Signal</keyword>
<protein>
    <recommendedName>
        <fullName evidence="1">Tol-Pal system protein TolB</fullName>
    </recommendedName>
</protein>
<accession>A7ZJC2</accession>
<feature type="signal peptide" evidence="1">
    <location>
        <begin position="1"/>
        <end position="21"/>
    </location>
</feature>
<feature type="chain" id="PRO_1000061936" description="Tol-Pal system protein TolB" evidence="1">
    <location>
        <begin position="22"/>
        <end position="430"/>
    </location>
</feature>
<sequence>MKQALRVAFGFLILWASVLHAEVRIVIDSGVDSGRPIGVVPFQWAGPGAAPEDIGGIVAADLRNSGKFNPLDRARLPQQPGSAQEVQPAAWSALGIDAVVVGQVTPNPDGSYNVAYQLVDTGGAPGTVLAQNSYKVNKQWLRYAGHTASDEVFEKLTGIKGAFRTRIAYVVQTNGGQFPYELRVSDYDGYNQFVVHRSPQPLMSPAWSPDGSKLAYVTFESGRSALVIQTLANGAVRQVASFPRHNGAPAFSPDGSKLAFALSKTGSLNLYVMDLASGQIRQVTDGRSNNTEPTWFPDSQNLAFTSDQAGRPQVYKVNINGGAPQRITWEGSQNQDADVSSDGKFMVMVSSNGGQQHIAKQDLATGGVQVLSSTFLDETPSLAPNGTMVIYSSSQGMGSVLNLVSTDGRFKARLPATDGQVKFPAWSPYL</sequence>
<dbReference type="EMBL" id="CP000800">
    <property type="protein sequence ID" value="ABV16700.1"/>
    <property type="molecule type" value="Genomic_DNA"/>
</dbReference>
<dbReference type="RefSeq" id="WP_001295307.1">
    <property type="nucleotide sequence ID" value="NC_009801.1"/>
</dbReference>
<dbReference type="SMR" id="A7ZJC2"/>
<dbReference type="GeneID" id="93776744"/>
<dbReference type="KEGG" id="ecw:EcE24377A_0769"/>
<dbReference type="HOGENOM" id="CLU_047123_0_0_6"/>
<dbReference type="Proteomes" id="UP000001122">
    <property type="component" value="Chromosome"/>
</dbReference>
<dbReference type="GO" id="GO:0042597">
    <property type="term" value="C:periplasmic space"/>
    <property type="evidence" value="ECO:0007669"/>
    <property type="project" value="UniProtKB-SubCell"/>
</dbReference>
<dbReference type="GO" id="GO:0051301">
    <property type="term" value="P:cell division"/>
    <property type="evidence" value="ECO:0007669"/>
    <property type="project" value="UniProtKB-UniRule"/>
</dbReference>
<dbReference type="GO" id="GO:0017038">
    <property type="term" value="P:protein import"/>
    <property type="evidence" value="ECO:0007669"/>
    <property type="project" value="InterPro"/>
</dbReference>
<dbReference type="FunFam" id="2.120.10.30:FF:000022">
    <property type="entry name" value="Tol-Pal system protein TolB"/>
    <property type="match status" value="1"/>
</dbReference>
<dbReference type="FunFam" id="3.40.50.10070:FF:000001">
    <property type="entry name" value="Tol-Pal system protein TolB"/>
    <property type="match status" value="1"/>
</dbReference>
<dbReference type="Gene3D" id="2.120.10.30">
    <property type="entry name" value="TolB, C-terminal domain"/>
    <property type="match status" value="1"/>
</dbReference>
<dbReference type="Gene3D" id="3.40.50.10070">
    <property type="entry name" value="TolB, N-terminal domain"/>
    <property type="match status" value="1"/>
</dbReference>
<dbReference type="HAMAP" id="MF_00671">
    <property type="entry name" value="TolB"/>
    <property type="match status" value="1"/>
</dbReference>
<dbReference type="InterPro" id="IPR011042">
    <property type="entry name" value="6-blade_b-propeller_TolB-like"/>
</dbReference>
<dbReference type="InterPro" id="IPR011659">
    <property type="entry name" value="PD40"/>
</dbReference>
<dbReference type="InterPro" id="IPR014167">
    <property type="entry name" value="Tol-Pal_TolB"/>
</dbReference>
<dbReference type="InterPro" id="IPR007195">
    <property type="entry name" value="TolB_N"/>
</dbReference>
<dbReference type="NCBIfam" id="TIGR02800">
    <property type="entry name" value="propeller_TolB"/>
    <property type="match status" value="1"/>
</dbReference>
<dbReference type="PANTHER" id="PTHR36842:SF1">
    <property type="entry name" value="PROTEIN TOLB"/>
    <property type="match status" value="1"/>
</dbReference>
<dbReference type="PANTHER" id="PTHR36842">
    <property type="entry name" value="PROTEIN TOLB HOMOLOG"/>
    <property type="match status" value="1"/>
</dbReference>
<dbReference type="Pfam" id="PF07676">
    <property type="entry name" value="PD40"/>
    <property type="match status" value="4"/>
</dbReference>
<dbReference type="Pfam" id="PF04052">
    <property type="entry name" value="TolB_N"/>
    <property type="match status" value="1"/>
</dbReference>
<dbReference type="SUPFAM" id="SSF52964">
    <property type="entry name" value="TolB, N-terminal domain"/>
    <property type="match status" value="1"/>
</dbReference>
<dbReference type="SUPFAM" id="SSF69304">
    <property type="entry name" value="Tricorn protease N-terminal domain"/>
    <property type="match status" value="1"/>
</dbReference>
<evidence type="ECO:0000255" key="1">
    <source>
        <dbReference type="HAMAP-Rule" id="MF_00671"/>
    </source>
</evidence>